<comment type="function">
    <text>Circadian clock component involved in the generation of biological rhythms, in particular in rhythm stability, period length, and temperature compensation. Behaves as a negative element in circadian transcriptional loop.</text>
</comment>
<comment type="subcellular location">
    <subcellularLocation>
        <location evidence="3">Nucleus</location>
    </subcellularLocation>
</comment>
<comment type="similarity">
    <text evidence="3">Belongs to the FRQ family.</text>
</comment>
<feature type="chain" id="PRO_0000087343" description="Frequency clock protein">
    <location>
        <begin position="1"/>
        <end position="997"/>
    </location>
</feature>
<feature type="region of interest" description="Disordered" evidence="2">
    <location>
        <begin position="1"/>
        <end position="153"/>
    </location>
</feature>
<feature type="region of interest" description="Disordered" evidence="2">
    <location>
        <begin position="214"/>
        <end position="311"/>
    </location>
</feature>
<feature type="region of interest" description="Disordered" evidence="2">
    <location>
        <begin position="381"/>
        <end position="447"/>
    </location>
</feature>
<feature type="region of interest" description="Disordered" evidence="2">
    <location>
        <begin position="524"/>
        <end position="590"/>
    </location>
</feature>
<feature type="region of interest" description="Disordered" evidence="2">
    <location>
        <begin position="665"/>
        <end position="694"/>
    </location>
</feature>
<feature type="region of interest" description="Disordered" evidence="2">
    <location>
        <begin position="889"/>
        <end position="908"/>
    </location>
</feature>
<feature type="region of interest" description="Disordered" evidence="2">
    <location>
        <begin position="975"/>
        <end position="997"/>
    </location>
</feature>
<feature type="short sequence motif" description="Nuclear localization signal" evidence="1">
    <location>
        <begin position="569"/>
        <end position="573"/>
    </location>
</feature>
<feature type="compositionally biased region" description="Polar residues" evidence="2">
    <location>
        <begin position="74"/>
        <end position="94"/>
    </location>
</feature>
<feature type="compositionally biased region" description="Basic and acidic residues" evidence="2">
    <location>
        <begin position="115"/>
        <end position="125"/>
    </location>
</feature>
<feature type="compositionally biased region" description="Polar residues" evidence="2">
    <location>
        <begin position="138"/>
        <end position="152"/>
    </location>
</feature>
<feature type="compositionally biased region" description="Basic residues" evidence="2">
    <location>
        <begin position="227"/>
        <end position="237"/>
    </location>
</feature>
<feature type="compositionally biased region" description="Low complexity" evidence="2">
    <location>
        <begin position="239"/>
        <end position="261"/>
    </location>
</feature>
<feature type="compositionally biased region" description="Polar residues" evidence="2">
    <location>
        <begin position="264"/>
        <end position="275"/>
    </location>
</feature>
<feature type="compositionally biased region" description="Low complexity" evidence="2">
    <location>
        <begin position="277"/>
        <end position="294"/>
    </location>
</feature>
<feature type="compositionally biased region" description="Polar residues" evidence="2">
    <location>
        <begin position="391"/>
        <end position="402"/>
    </location>
</feature>
<feature type="compositionally biased region" description="Gly residues" evidence="2">
    <location>
        <begin position="410"/>
        <end position="421"/>
    </location>
</feature>
<feature type="compositionally biased region" description="Basic and acidic residues" evidence="2">
    <location>
        <begin position="438"/>
        <end position="447"/>
    </location>
</feature>
<feature type="compositionally biased region" description="Polar residues" evidence="2">
    <location>
        <begin position="675"/>
        <end position="688"/>
    </location>
</feature>
<feature type="compositionally biased region" description="Polar residues" evidence="2">
    <location>
        <begin position="986"/>
        <end position="997"/>
    </location>
</feature>
<name>FRQ_SORFI</name>
<keyword id="KW-0090">Biological rhythms</keyword>
<keyword id="KW-0539">Nucleus</keyword>
<keyword id="KW-0804">Transcription</keyword>
<keyword id="KW-0805">Transcription regulation</keyword>
<reference key="1">
    <citation type="journal article" date="1994" name="EMBO J.">
        <title>Intergeneric complementation of a circadian rhythmicity defect: phylogenetic conservation of structure and function of the clock gene frequency.</title>
        <authorList>
            <person name="Merrow M.W."/>
            <person name="Dunlap J.C."/>
        </authorList>
    </citation>
    <scope>NUCLEOTIDE SEQUENCE [GENOMIC DNA]</scope>
    <source>
        <strain>FGSC 2918</strain>
    </source>
</reference>
<dbReference type="EMBL" id="L14467">
    <property type="protein sequence ID" value="AAA20825.1"/>
    <property type="molecule type" value="Genomic_DNA"/>
</dbReference>
<dbReference type="PIR" id="S44457">
    <property type="entry name" value="S44457"/>
</dbReference>
<dbReference type="GO" id="GO:0005737">
    <property type="term" value="C:cytoplasm"/>
    <property type="evidence" value="ECO:0007669"/>
    <property type="project" value="InterPro"/>
</dbReference>
<dbReference type="GO" id="GO:0005634">
    <property type="term" value="C:nucleus"/>
    <property type="evidence" value="ECO:0007669"/>
    <property type="project" value="UniProtKB-SubCell"/>
</dbReference>
<dbReference type="GO" id="GO:0007623">
    <property type="term" value="P:circadian rhythm"/>
    <property type="evidence" value="ECO:0007669"/>
    <property type="project" value="InterPro"/>
</dbReference>
<dbReference type="GO" id="GO:0006355">
    <property type="term" value="P:regulation of DNA-templated transcription"/>
    <property type="evidence" value="ECO:0007669"/>
    <property type="project" value="InterPro"/>
</dbReference>
<dbReference type="InterPro" id="IPR018554">
    <property type="entry name" value="FRQ"/>
</dbReference>
<dbReference type="Pfam" id="PF09421">
    <property type="entry name" value="FRQ"/>
    <property type="match status" value="1"/>
</dbReference>
<protein>
    <recommendedName>
        <fullName>Frequency clock protein</fullName>
    </recommendedName>
</protein>
<evidence type="ECO:0000255" key="1"/>
<evidence type="ECO:0000256" key="2">
    <source>
        <dbReference type="SAM" id="MobiDB-lite"/>
    </source>
</evidence>
<evidence type="ECO:0000305" key="3"/>
<accession>Q09033</accession>
<gene>
    <name type="primary">FRQ</name>
</gene>
<proteinExistence type="inferred from homology"/>
<sequence>MADSGDKSQGMRPPPFDSRGHPLPRRASPDKSITLHNHRLARDASSRVISSSALGVTGPQPQPTSSPTRRDSSGESNDTGQSDPKSWFDQSNRNPVAAFNDESNIMEVDPPFYQKETDSSNEDSRYPPGRNPSYPPRDTQTQGFRATVAHSSSADDFRSVIDDLTVENKRLKEELKRYKQFGSDMMRKEKLFEIKVHGLPRRKKRELEATLREFAASLGDSSESTSQRRKAGRHGKAVHSSGVSLSKHDSSSSSRSRPVDSAYASMSTGRSSHAAHSSGPSLGRPSLSSKSTSSQKVESYLRDTPDGLLPHHVVMTDKEKKKLVVRRLEQLFTGKISGRNMQRIPSIPSMDAALVSEGTIMAPPRPPPEGSREACIQLQEGENPEKIRSSKGATSASNSGGDQTEVGGTVTAGGDGNGSGGRTVNNTSPPGVIAPDQRPTRPRDLDPDRVQIPSENMDYIRHLGLVSPEFLQGSRTSYQDVAPDAEGWVYLNLLCNLAQLHMINVTPSFIRQAVSEKSTKFQLSSDGRKIRWRGGTDGTKFSSDNGEDKSQKSPLTDDTEDGSDKTGRRKKQKTQQARSEIGRLGLSRSPSDTFHYKPMFVHCHASSAETSLEESASQGSEDFVDESNLANSKWDFSGSGTTQQRRKRRYDGAIVYYTGAQFCTDLSGEPGDMSPTEQMTATGEQEASGSGDEAGRVLQRTLSGSSLLVRPLSDDRARVAEALDFDPQNPPDLVSDDGFSPNDEDFVFPWCEDPAKTQVQPLAKEVMGRSGLGGVLPDDHFAIFVTTRRVMRPTLQRHLSRSTTSEDTAEIIAERLASIRTSSPLPPPRSRNLILAPLQIEYVAGEFHRLNPASLPPPAMFYPPFSTDSSWDDGDDLVSVEEEVEEMEEESFSEGQMSRRANPHFSDNNTYMRKEDLAFDTETDVRMDSSHDHRMSSDSGLMMRSVMRRPVAVDGDGSPLATVTGRDVDMLHTSSSVATAGGAESGYSSSMEDVSSS</sequence>
<organism>
    <name type="scientific">Sordaria fimicola</name>
    <dbReference type="NCBI Taxonomy" id="27338"/>
    <lineage>
        <taxon>Eukaryota</taxon>
        <taxon>Fungi</taxon>
        <taxon>Dikarya</taxon>
        <taxon>Ascomycota</taxon>
        <taxon>Pezizomycotina</taxon>
        <taxon>Sordariomycetes</taxon>
        <taxon>Sordariomycetidae</taxon>
        <taxon>Sordariales</taxon>
        <taxon>Sordariaceae</taxon>
        <taxon>Sordaria</taxon>
    </lineage>
</organism>